<evidence type="ECO:0000250" key="1">
    <source>
        <dbReference type="UniProtKB" id="L0E2Z4"/>
    </source>
</evidence>
<evidence type="ECO:0000250" key="2">
    <source>
        <dbReference type="UniProtKB" id="O93868"/>
    </source>
</evidence>
<evidence type="ECO:0000255" key="3">
    <source>
        <dbReference type="PROSITE-ProRule" id="PRU10001"/>
    </source>
</evidence>
<evidence type="ECO:0000269" key="4">
    <source>
    </source>
</evidence>
<evidence type="ECO:0000269" key="5">
    <source>
    </source>
</evidence>
<evidence type="ECO:0000269" key="6">
    <source>
    </source>
</evidence>
<evidence type="ECO:0000303" key="7">
    <source>
    </source>
</evidence>
<evidence type="ECO:0000305" key="8"/>
<comment type="function">
    <text evidence="4 5 6">Short chain dehydrogenase/reductase; part of the gene cluster that mediates the biosynthesis of the tetrahydroxanthone dimer neosartorin, which exhibits antibacterial activity (PubMed:30394754, PubMed:32105084, PubMed:33891392). The two different monomeric units appear to be synthesized by the same set of enzymes, among which the Baeyer-Villiger monooxygenase nsrF is the key enzyme for the divergence of the biosynthetic routes (PubMed:32105084). The pathway begins with the synthesis of atrochrysone thioester by the polyketide synthase nsrB (PubMed:32105084). The atrochrysone carboxyl ACP thioesterase nsrC then breaks the thioester bond and releases the atrochrysone carboxylic acid from AacuL (PubMed:32105084). Atrochrysone carboxylic acid is decarboxylated by the decarboxylase nsrE, and oxidized by the anthrone oxygenase nsrD to yield emodin (PubMed:32105084). Emodin is then reduced to emodin hydroquinone by the oxidoreductase nsrR (PubMed:32105084). A-ring reduction by the short chain dehydrogenase nsrJ, dehydration by the scytalone dehydratase-like protein nsrI and probable spontaneous re-oxidation, results in overall deoxygenation to chrysophanol (PubMed:32105084). The Baeyer-Villiger monooxygenase nsrF accepts chrysophanol as a substrate to insert one oxygen atom at two different positions to yield the precursors of both monomric units (PubMed:30394754, PubMed:32105084, PubMed:33891392). NsrF is promiscuous/flexible in interacting with the 2 (non methylated and methylated) aromatic rings of chrysophanol, thus diverging the biosynthetic pathway at this point (PubMed:30394754, PubMed:32105084, PubMed:33891392). After the hydrolysis of the lactones, methylesterification by the methyltransferase nsrG yields respectively moniliphenone and 2,2',6'-trihydroxy-4-methyl-6-methoxya-cyldiphenylmethanone (PubMed:30394754, PubMed:32105084). The next steps are the hydroxylation by the FAD-dependent monooxygenase nsrK, followed by isomerization by the monooxygenase nsrQ (PubMed:32105084). The short chain dehydrogenase/reductase nsrO then catalyzes the C-5 ketoreduction to give the xanthone skeleton of blennolide C and 5-acetylblennolide A (PubMed:32105084). The acetyltransferase nsrL has a strict substrate specificity and uses only blennolide A but not blennolide C to yield 5-acetylblennolide A as the single-acetylated product (PubMed:30394754). In the final step of the biosynthesis, the heterodimerization of the 2 xanthones, blennolide C and 5-acetylblennolide A, is catalyzed by the cytochrome P450 monooxygenase nsrP (PubMed:30394754). NsrP can utilize at least three different xanthones as its substrates to perform the dimerization reaction (PubMed:30394754).</text>
</comment>
<comment type="pathway">
    <text evidence="5">Secondary metabolite biosynthesis.</text>
</comment>
<comment type="similarity">
    <text evidence="8">Belongs to the short-chain dehydrogenases/reductases (SDR) family.</text>
</comment>
<feature type="chain" id="PRO_0000453452" description="Short chain dehydrogenase/reductase nsrJ">
    <location>
        <begin position="1"/>
        <end position="264"/>
    </location>
</feature>
<feature type="active site" description="Proton donor" evidence="2">
    <location>
        <position position="146"/>
    </location>
</feature>
<feature type="active site" description="Proton donor" evidence="2">
    <location>
        <position position="147"/>
    </location>
</feature>
<feature type="active site" description="Proton acceptor" evidence="3">
    <location>
        <position position="161"/>
    </location>
</feature>
<feature type="active site" description="Lowers pKa of active site Tyr" evidence="2">
    <location>
        <position position="165"/>
    </location>
</feature>
<feature type="binding site" evidence="1">
    <location>
        <position position="24"/>
    </location>
    <ligand>
        <name>NADP(+)</name>
        <dbReference type="ChEBI" id="CHEBI:58349"/>
    </ligand>
</feature>
<feature type="binding site" evidence="1">
    <location>
        <position position="70"/>
    </location>
    <ligand>
        <name>NADP(+)</name>
        <dbReference type="ChEBI" id="CHEBI:58349"/>
    </ligand>
</feature>
<feature type="binding site" evidence="2">
    <location>
        <position position="97"/>
    </location>
    <ligand>
        <name>NADP(+)</name>
        <dbReference type="ChEBI" id="CHEBI:58349"/>
    </ligand>
</feature>
<feature type="binding site" evidence="1">
    <location>
        <position position="130"/>
    </location>
    <ligand>
        <name>NADP(+)</name>
        <dbReference type="ChEBI" id="CHEBI:58349"/>
    </ligand>
</feature>
<feature type="binding site" evidence="2">
    <location>
        <position position="161"/>
    </location>
    <ligand>
        <name>NADP(+)</name>
        <dbReference type="ChEBI" id="CHEBI:58349"/>
    </ligand>
</feature>
<feature type="binding site" evidence="2">
    <location>
        <position position="165"/>
    </location>
    <ligand>
        <name>NADP(+)</name>
        <dbReference type="ChEBI" id="CHEBI:58349"/>
    </ligand>
</feature>
<feature type="binding site" evidence="1">
    <location>
        <position position="196"/>
    </location>
    <ligand>
        <name>NADP(+)</name>
        <dbReference type="ChEBI" id="CHEBI:58349"/>
    </ligand>
</feature>
<organism>
    <name type="scientific">Aspergillus novofumigatus (strain IBT 16806)</name>
    <dbReference type="NCBI Taxonomy" id="1392255"/>
    <lineage>
        <taxon>Eukaryota</taxon>
        <taxon>Fungi</taxon>
        <taxon>Dikarya</taxon>
        <taxon>Ascomycota</taxon>
        <taxon>Pezizomycotina</taxon>
        <taxon>Eurotiomycetes</taxon>
        <taxon>Eurotiomycetidae</taxon>
        <taxon>Eurotiales</taxon>
        <taxon>Aspergillaceae</taxon>
        <taxon>Aspergillus</taxon>
        <taxon>Aspergillus subgen. Fumigati</taxon>
    </lineage>
</organism>
<gene>
    <name evidence="7" type="primary">nsrJ</name>
    <name type="ORF">P174DRAFT_460884</name>
</gene>
<dbReference type="EC" id="1.3.1.-" evidence="5"/>
<dbReference type="EMBL" id="MSZS01000005">
    <property type="protein sequence ID" value="PKX92300.1"/>
    <property type="molecule type" value="Genomic_DNA"/>
</dbReference>
<dbReference type="SMR" id="A0A2I1C3T5"/>
<dbReference type="STRING" id="1392255.A0A2I1C3T5"/>
<dbReference type="VEuPathDB" id="FungiDB:P174DRAFT_460884"/>
<dbReference type="OMA" id="PKPFIEH"/>
<dbReference type="OrthoDB" id="47007at2759"/>
<dbReference type="Proteomes" id="UP000234474">
    <property type="component" value="Unassembled WGS sequence"/>
</dbReference>
<dbReference type="GO" id="GO:0016614">
    <property type="term" value="F:oxidoreductase activity, acting on CH-OH group of donors"/>
    <property type="evidence" value="ECO:0007669"/>
    <property type="project" value="UniProtKB-ARBA"/>
</dbReference>
<dbReference type="GO" id="GO:0044550">
    <property type="term" value="P:secondary metabolite biosynthetic process"/>
    <property type="evidence" value="ECO:0007669"/>
    <property type="project" value="UniProtKB-ARBA"/>
</dbReference>
<dbReference type="FunFam" id="3.40.50.720:FF:000084">
    <property type="entry name" value="Short-chain dehydrogenase reductase"/>
    <property type="match status" value="1"/>
</dbReference>
<dbReference type="Gene3D" id="3.40.50.720">
    <property type="entry name" value="NAD(P)-binding Rossmann-like Domain"/>
    <property type="match status" value="1"/>
</dbReference>
<dbReference type="InterPro" id="IPR036291">
    <property type="entry name" value="NAD(P)-bd_dom_sf"/>
</dbReference>
<dbReference type="InterPro" id="IPR020904">
    <property type="entry name" value="Sc_DH/Rdtase_CS"/>
</dbReference>
<dbReference type="InterPro" id="IPR002347">
    <property type="entry name" value="SDR_fam"/>
</dbReference>
<dbReference type="PANTHER" id="PTHR48107">
    <property type="entry name" value="NADPH-DEPENDENT ALDEHYDE REDUCTASE-LIKE PROTEIN, CHLOROPLASTIC-RELATED"/>
    <property type="match status" value="1"/>
</dbReference>
<dbReference type="PANTHER" id="PTHR48107:SF7">
    <property type="entry name" value="RE15974P"/>
    <property type="match status" value="1"/>
</dbReference>
<dbReference type="Pfam" id="PF13561">
    <property type="entry name" value="adh_short_C2"/>
    <property type="match status" value="1"/>
</dbReference>
<dbReference type="PRINTS" id="PR00081">
    <property type="entry name" value="GDHRDH"/>
</dbReference>
<dbReference type="PRINTS" id="PR00080">
    <property type="entry name" value="SDRFAMILY"/>
</dbReference>
<dbReference type="SUPFAM" id="SSF51735">
    <property type="entry name" value="NAD(P)-binding Rossmann-fold domains"/>
    <property type="match status" value="1"/>
</dbReference>
<dbReference type="PROSITE" id="PS00061">
    <property type="entry name" value="ADH_SHORT"/>
    <property type="match status" value="1"/>
</dbReference>
<keyword id="KW-0521">NADP</keyword>
<keyword id="KW-0560">Oxidoreductase</keyword>
<keyword id="KW-1185">Reference proteome</keyword>
<sequence length="264" mass="28152">MTIPYTPGRLDGKVALVTGSGRGIGAAIAIQLGRLGAKVVVNYANSAEHAEKVVAEIKAHGSDAVAFKADMRRVAETAKLFDDAVAHFGHLDIAVSNSGVVSFGHLKDVTEEEFDRVFSLNTRGQFFVAREAYRVLSEGGRIILTSSNTSKDFSVPRHSVYSGSKGAIDSFVRILSKDCGDKKITVNGVAPGGTVTDMFHAVSHHYIPNGEKFTAEERQQMAAHASPLHRNGFPEDIANVVGFLVSKEGEWVNGKVITLDGGAA</sequence>
<protein>
    <recommendedName>
        <fullName evidence="7">Short chain dehydrogenase/reductase nsrJ</fullName>
        <shortName evidence="7">SDR nsrJ</shortName>
        <ecNumber evidence="5">1.3.1.-</ecNumber>
    </recommendedName>
    <alternativeName>
        <fullName evidence="7">Neosartorin biosynthesis cluster protein J</fullName>
    </alternativeName>
</protein>
<proteinExistence type="evidence at protein level"/>
<reference key="1">
    <citation type="journal article" date="2018" name="Proc. Natl. Acad. Sci. U.S.A.">
        <title>Linking secondary metabolites to gene clusters through genome sequencing of six diverse Aspergillus species.</title>
        <authorList>
            <person name="Kjaerboelling I."/>
            <person name="Vesth T.C."/>
            <person name="Frisvad J.C."/>
            <person name="Nybo J.L."/>
            <person name="Theobald S."/>
            <person name="Kuo A."/>
            <person name="Bowyer P."/>
            <person name="Matsuda Y."/>
            <person name="Mondo S."/>
            <person name="Lyhne E.K."/>
            <person name="Kogle M.E."/>
            <person name="Clum A."/>
            <person name="Lipzen A."/>
            <person name="Salamov A."/>
            <person name="Ngan C.Y."/>
            <person name="Daum C."/>
            <person name="Chiniquy J."/>
            <person name="Barry K."/>
            <person name="LaButti K."/>
            <person name="Haridas S."/>
            <person name="Simmons B.A."/>
            <person name="Magnuson J.K."/>
            <person name="Mortensen U.H."/>
            <person name="Larsen T.O."/>
            <person name="Grigoriev I.V."/>
            <person name="Baker S.E."/>
            <person name="Andersen M.R."/>
        </authorList>
    </citation>
    <scope>NUCLEOTIDE SEQUENCE [LARGE SCALE GENOMIC DNA]</scope>
    <source>
        <strain>IBT 16806</strain>
    </source>
</reference>
<reference key="2">
    <citation type="journal article" date="2018" name="Org. Lett.">
        <title>Genetic characterization of neosartorin biosynthesis provides insight into heterodimeric natural product generation.</title>
        <authorList>
            <person name="Matsuda Y."/>
            <person name="Gotfredsen C.H."/>
            <person name="Larsen T.O."/>
        </authorList>
    </citation>
    <scope>FUNCTION</scope>
</reference>
<reference key="3">
    <citation type="journal article" date="2020" name="Org. Lett.">
        <title>Unraveling the fungal strategy for tetrahydroxanthone biosynthesis and diversification.</title>
        <authorList>
            <person name="Wei X."/>
            <person name="Matsuda Y."/>
        </authorList>
    </citation>
    <scope>FUNCTION</scope>
    <scope>CATALYTIC ACTIVITY</scope>
    <scope>PATHWAY</scope>
</reference>
<reference key="4">
    <citation type="journal article" date="2021" name="J. Nat. Prod.">
        <title>Heterologous biosynthesis of tetrahydroxanthone dimers: determination of key factors for selective or divergent synthesis.</title>
        <authorList>
            <person name="Wei X."/>
            <person name="Chen X."/>
            <person name="Chen L."/>
            <person name="Yan D."/>
            <person name="Wang W.G."/>
            <person name="Matsuda Y."/>
        </authorList>
    </citation>
    <scope>FUNCTION</scope>
</reference>
<name>NSRJ_ASPN1</name>
<accession>A0A2I1C3T5</accession>